<protein>
    <recommendedName>
        <fullName>Uncharacterized protein UU158</fullName>
    </recommendedName>
</protein>
<proteinExistence type="predicted"/>
<accession>Q9PQY6</accession>
<comment type="subcellular location">
    <subcellularLocation>
        <location evidence="2">Cell membrane</location>
        <topology evidence="2">Multi-pass membrane protein</topology>
    </subcellularLocation>
</comment>
<name>Y158_UREPA</name>
<organism>
    <name type="scientific">Ureaplasma parvum serovar 3 (strain ATCC 700970)</name>
    <dbReference type="NCBI Taxonomy" id="273119"/>
    <lineage>
        <taxon>Bacteria</taxon>
        <taxon>Bacillati</taxon>
        <taxon>Mycoplasmatota</taxon>
        <taxon>Mycoplasmoidales</taxon>
        <taxon>Mycoplasmoidaceae</taxon>
        <taxon>Ureaplasma</taxon>
    </lineage>
</organism>
<gene>
    <name type="ordered locus">UU158</name>
</gene>
<keyword id="KW-1003">Cell membrane</keyword>
<keyword id="KW-0472">Membrane</keyword>
<keyword id="KW-1185">Reference proteome</keyword>
<keyword id="KW-0812">Transmembrane</keyword>
<keyword id="KW-1133">Transmembrane helix</keyword>
<reference key="1">
    <citation type="journal article" date="2000" name="Nature">
        <title>The complete sequence of the mucosal pathogen Ureaplasma urealyticum.</title>
        <authorList>
            <person name="Glass J.I."/>
            <person name="Lefkowitz E.J."/>
            <person name="Glass J.S."/>
            <person name="Heiner C.R."/>
            <person name="Chen E.Y."/>
            <person name="Cassell G.H."/>
        </authorList>
    </citation>
    <scope>NUCLEOTIDE SEQUENCE [LARGE SCALE GENOMIC DNA]</scope>
    <source>
        <strain>ATCC 700970</strain>
    </source>
</reference>
<sequence>MTKQEFKAITKELFFFNKKRLMLWIAILIFVIAFAMIIVFVPFFNFNDKIKSLFDKLKHINWQDPTALFGLVFSVLGYLITALSIPLKVFELMLMLRFRLMLAKLIKDGILDPKAFIDDIRHSYLSRRKQRKLEEEIEYLKRIKSDY</sequence>
<feature type="chain" id="PRO_0000220817" description="Uncharacterized protein UU158">
    <location>
        <begin position="1"/>
        <end position="147"/>
    </location>
</feature>
<feature type="transmembrane region" description="Helical" evidence="1">
    <location>
        <begin position="21"/>
        <end position="41"/>
    </location>
</feature>
<feature type="transmembrane region" description="Helical" evidence="1">
    <location>
        <begin position="67"/>
        <end position="87"/>
    </location>
</feature>
<evidence type="ECO:0000255" key="1"/>
<evidence type="ECO:0000305" key="2"/>
<dbReference type="EMBL" id="AF222894">
    <property type="protein sequence ID" value="AAF30564.1"/>
    <property type="molecule type" value="Genomic_DNA"/>
</dbReference>
<dbReference type="RefSeq" id="WP_004026698.1">
    <property type="nucleotide sequence ID" value="NC_002162.1"/>
</dbReference>
<dbReference type="STRING" id="273119.UU158"/>
<dbReference type="EnsemblBacteria" id="AAF30564">
    <property type="protein sequence ID" value="AAF30564"/>
    <property type="gene ID" value="UU158"/>
</dbReference>
<dbReference type="GeneID" id="29672733"/>
<dbReference type="KEGG" id="uur:UU158"/>
<dbReference type="HOGENOM" id="CLU_1767264_0_0_14"/>
<dbReference type="OrthoDB" id="9901823at2"/>
<dbReference type="Proteomes" id="UP000000423">
    <property type="component" value="Chromosome"/>
</dbReference>
<dbReference type="GO" id="GO:0005886">
    <property type="term" value="C:plasma membrane"/>
    <property type="evidence" value="ECO:0007669"/>
    <property type="project" value="UniProtKB-SubCell"/>
</dbReference>